<proteinExistence type="inferred from homology"/>
<protein>
    <recommendedName>
        <fullName evidence="1">Ubiquinone/menaquinone biosynthesis C-methyltransferase UbiE</fullName>
        <ecNumber evidence="1">2.1.1.163</ecNumber>
        <ecNumber evidence="1">2.1.1.201</ecNumber>
    </recommendedName>
    <alternativeName>
        <fullName evidence="1">2-methoxy-6-polyprenyl-1,4-benzoquinol methylase</fullName>
    </alternativeName>
    <alternativeName>
        <fullName evidence="1">Demethylmenaquinone methyltransferase</fullName>
    </alternativeName>
</protein>
<feature type="chain" id="PRO_0000193320" description="Ubiquinone/menaquinone biosynthesis C-methyltransferase UbiE">
    <location>
        <begin position="1"/>
        <end position="248"/>
    </location>
</feature>
<feature type="binding site" evidence="1">
    <location>
        <position position="68"/>
    </location>
    <ligand>
        <name>S-adenosyl-L-methionine</name>
        <dbReference type="ChEBI" id="CHEBI:59789"/>
    </ligand>
</feature>
<feature type="binding site" evidence="1">
    <location>
        <position position="92"/>
    </location>
    <ligand>
        <name>S-adenosyl-L-methionine</name>
        <dbReference type="ChEBI" id="CHEBI:59789"/>
    </ligand>
</feature>
<sequence length="248" mass="28260">MNQTNFGFKKVDYTKKQGLVNNVFSNVADKYDLMNDLMSLGLHRLWKDEFIRQIPNLNSHILDVASGSGDIALKLAKKARDRVNNISLTLSDINEEMLKQAKKKAIDLNLFQNLKFTVASAEELPFPDDSFDYYTIAFGIRNVPDINKALKEACRVLKPMGKFICLEFSKVKEGYIKDFYKFYSFNIIPSIGQMIAGNKEAYEYLVESIDLFPSQDEFRIMIKDAGFEEVGYKNLSGGIVAIHSAYIQ</sequence>
<dbReference type="EC" id="2.1.1.163" evidence="1"/>
<dbReference type="EC" id="2.1.1.201" evidence="1"/>
<dbReference type="EMBL" id="AE006914">
    <property type="protein sequence ID" value="AAL03575.1"/>
    <property type="molecule type" value="Genomic_DNA"/>
</dbReference>
<dbReference type="PIR" id="E97829">
    <property type="entry name" value="E97829"/>
</dbReference>
<dbReference type="RefSeq" id="WP_010977615.1">
    <property type="nucleotide sequence ID" value="NC_003103.1"/>
</dbReference>
<dbReference type="SMR" id="Q92GT5"/>
<dbReference type="GeneID" id="928183"/>
<dbReference type="KEGG" id="rco:RC1037"/>
<dbReference type="PATRIC" id="fig|272944.4.peg.1185"/>
<dbReference type="HOGENOM" id="CLU_037990_0_1_5"/>
<dbReference type="UniPathway" id="UPA00079">
    <property type="reaction ID" value="UER00169"/>
</dbReference>
<dbReference type="UniPathway" id="UPA00232"/>
<dbReference type="Proteomes" id="UP000000816">
    <property type="component" value="Chromosome"/>
</dbReference>
<dbReference type="GO" id="GO:0008425">
    <property type="term" value="F:2-methoxy-6-polyprenyl-1,4-benzoquinol methyltransferase activity"/>
    <property type="evidence" value="ECO:0007669"/>
    <property type="project" value="UniProtKB-UniRule"/>
</dbReference>
<dbReference type="GO" id="GO:0043770">
    <property type="term" value="F:demethylmenaquinone methyltransferase activity"/>
    <property type="evidence" value="ECO:0007669"/>
    <property type="project" value="UniProtKB-UniRule"/>
</dbReference>
<dbReference type="GO" id="GO:0009060">
    <property type="term" value="P:aerobic respiration"/>
    <property type="evidence" value="ECO:0007669"/>
    <property type="project" value="UniProtKB-UniRule"/>
</dbReference>
<dbReference type="GO" id="GO:0009234">
    <property type="term" value="P:menaquinone biosynthetic process"/>
    <property type="evidence" value="ECO:0007669"/>
    <property type="project" value="UniProtKB-UniRule"/>
</dbReference>
<dbReference type="GO" id="GO:0032259">
    <property type="term" value="P:methylation"/>
    <property type="evidence" value="ECO:0007669"/>
    <property type="project" value="UniProtKB-KW"/>
</dbReference>
<dbReference type="CDD" id="cd02440">
    <property type="entry name" value="AdoMet_MTases"/>
    <property type="match status" value="1"/>
</dbReference>
<dbReference type="FunFam" id="3.40.50.150:FF:000250">
    <property type="entry name" value="Ubiquinone/menaquinone biosynthesis C-methyltransferase UbiE"/>
    <property type="match status" value="1"/>
</dbReference>
<dbReference type="Gene3D" id="3.40.50.150">
    <property type="entry name" value="Vaccinia Virus protein VP39"/>
    <property type="match status" value="1"/>
</dbReference>
<dbReference type="HAMAP" id="MF_01813">
    <property type="entry name" value="MenG_UbiE_methyltr"/>
    <property type="match status" value="1"/>
</dbReference>
<dbReference type="InterPro" id="IPR029063">
    <property type="entry name" value="SAM-dependent_MTases_sf"/>
</dbReference>
<dbReference type="InterPro" id="IPR004033">
    <property type="entry name" value="UbiE/COQ5_MeTrFase"/>
</dbReference>
<dbReference type="InterPro" id="IPR023576">
    <property type="entry name" value="UbiE/COQ5_MeTrFase_CS"/>
</dbReference>
<dbReference type="NCBIfam" id="TIGR01934">
    <property type="entry name" value="MenG_MenH_UbiE"/>
    <property type="match status" value="1"/>
</dbReference>
<dbReference type="NCBIfam" id="NF001242">
    <property type="entry name" value="PRK00216.1-3"/>
    <property type="match status" value="1"/>
</dbReference>
<dbReference type="NCBIfam" id="NF001244">
    <property type="entry name" value="PRK00216.1-5"/>
    <property type="match status" value="1"/>
</dbReference>
<dbReference type="PANTHER" id="PTHR43591:SF24">
    <property type="entry name" value="2-METHOXY-6-POLYPRENYL-1,4-BENZOQUINOL METHYLASE, MITOCHONDRIAL"/>
    <property type="match status" value="1"/>
</dbReference>
<dbReference type="PANTHER" id="PTHR43591">
    <property type="entry name" value="METHYLTRANSFERASE"/>
    <property type="match status" value="1"/>
</dbReference>
<dbReference type="Pfam" id="PF01209">
    <property type="entry name" value="Ubie_methyltran"/>
    <property type="match status" value="1"/>
</dbReference>
<dbReference type="SUPFAM" id="SSF53335">
    <property type="entry name" value="S-adenosyl-L-methionine-dependent methyltransferases"/>
    <property type="match status" value="1"/>
</dbReference>
<dbReference type="PROSITE" id="PS51608">
    <property type="entry name" value="SAM_MT_UBIE"/>
    <property type="match status" value="1"/>
</dbReference>
<dbReference type="PROSITE" id="PS01183">
    <property type="entry name" value="UBIE_1"/>
    <property type="match status" value="1"/>
</dbReference>
<dbReference type="PROSITE" id="PS01184">
    <property type="entry name" value="UBIE_2"/>
    <property type="match status" value="1"/>
</dbReference>
<organism>
    <name type="scientific">Rickettsia conorii (strain ATCC VR-613 / Malish 7)</name>
    <dbReference type="NCBI Taxonomy" id="272944"/>
    <lineage>
        <taxon>Bacteria</taxon>
        <taxon>Pseudomonadati</taxon>
        <taxon>Pseudomonadota</taxon>
        <taxon>Alphaproteobacteria</taxon>
        <taxon>Rickettsiales</taxon>
        <taxon>Rickettsiaceae</taxon>
        <taxon>Rickettsieae</taxon>
        <taxon>Rickettsia</taxon>
        <taxon>spotted fever group</taxon>
    </lineage>
</organism>
<comment type="function">
    <text evidence="1">Methyltransferase required for the conversion of demethylmenaquinol (DMKH2) to menaquinol (MKH2) and the conversion of 2-polyprenyl-6-methoxy-1,4-benzoquinol (DDMQH2) to 2-polyprenyl-3-methyl-6-methoxy-1,4-benzoquinol (DMQH2).</text>
</comment>
<comment type="catalytic activity">
    <reaction evidence="1">
        <text>a 2-demethylmenaquinol + S-adenosyl-L-methionine = a menaquinol + S-adenosyl-L-homocysteine + H(+)</text>
        <dbReference type="Rhea" id="RHEA:42640"/>
        <dbReference type="Rhea" id="RHEA-COMP:9539"/>
        <dbReference type="Rhea" id="RHEA-COMP:9563"/>
        <dbReference type="ChEBI" id="CHEBI:15378"/>
        <dbReference type="ChEBI" id="CHEBI:18151"/>
        <dbReference type="ChEBI" id="CHEBI:55437"/>
        <dbReference type="ChEBI" id="CHEBI:57856"/>
        <dbReference type="ChEBI" id="CHEBI:59789"/>
        <dbReference type="EC" id="2.1.1.163"/>
    </reaction>
</comment>
<comment type="catalytic activity">
    <reaction evidence="1">
        <text>a 2-methoxy-6-(all-trans-polyprenyl)benzene-1,4-diol + S-adenosyl-L-methionine = a 5-methoxy-2-methyl-3-(all-trans-polyprenyl)benzene-1,4-diol + S-adenosyl-L-homocysteine + H(+)</text>
        <dbReference type="Rhea" id="RHEA:28286"/>
        <dbReference type="Rhea" id="RHEA-COMP:10858"/>
        <dbReference type="Rhea" id="RHEA-COMP:10859"/>
        <dbReference type="ChEBI" id="CHEBI:15378"/>
        <dbReference type="ChEBI" id="CHEBI:57856"/>
        <dbReference type="ChEBI" id="CHEBI:59789"/>
        <dbReference type="ChEBI" id="CHEBI:84166"/>
        <dbReference type="ChEBI" id="CHEBI:84167"/>
        <dbReference type="EC" id="2.1.1.201"/>
    </reaction>
</comment>
<comment type="pathway">
    <text evidence="1">Quinol/quinone metabolism; menaquinone biosynthesis; menaquinol from 1,4-dihydroxy-2-naphthoate: step 2/2.</text>
</comment>
<comment type="pathway">
    <text evidence="1">Cofactor biosynthesis; ubiquinone biosynthesis.</text>
</comment>
<comment type="similarity">
    <text evidence="1">Belongs to the class I-like SAM-binding methyltransferase superfamily. MenG/UbiE family.</text>
</comment>
<gene>
    <name evidence="1" type="primary">ubiE</name>
    <name type="ordered locus">RC1037</name>
</gene>
<evidence type="ECO:0000255" key="1">
    <source>
        <dbReference type="HAMAP-Rule" id="MF_01813"/>
    </source>
</evidence>
<accession>Q92GT5</accession>
<keyword id="KW-0474">Menaquinone biosynthesis</keyword>
<keyword id="KW-0489">Methyltransferase</keyword>
<keyword id="KW-0949">S-adenosyl-L-methionine</keyword>
<keyword id="KW-0808">Transferase</keyword>
<keyword id="KW-0831">Ubiquinone biosynthesis</keyword>
<reference key="1">
    <citation type="journal article" date="2001" name="Science">
        <title>Mechanisms of evolution in Rickettsia conorii and R. prowazekii.</title>
        <authorList>
            <person name="Ogata H."/>
            <person name="Audic S."/>
            <person name="Renesto-Audiffren P."/>
            <person name="Fournier P.-E."/>
            <person name="Barbe V."/>
            <person name="Samson D."/>
            <person name="Roux V."/>
            <person name="Cossart P."/>
            <person name="Weissenbach J."/>
            <person name="Claverie J.-M."/>
            <person name="Raoult D."/>
        </authorList>
    </citation>
    <scope>NUCLEOTIDE SEQUENCE [LARGE SCALE GENOMIC DNA]</scope>
    <source>
        <strain>ATCC VR-613 / Malish 7</strain>
    </source>
</reference>
<name>UBIE_RICCN</name>